<gene>
    <name evidence="1" type="primary">rpoA</name>
    <name type="ordered locus">lp_1062</name>
</gene>
<keyword id="KW-0240">DNA-directed RNA polymerase</keyword>
<keyword id="KW-0548">Nucleotidyltransferase</keyword>
<keyword id="KW-1185">Reference proteome</keyword>
<keyword id="KW-0804">Transcription</keyword>
<keyword id="KW-0808">Transferase</keyword>
<dbReference type="EC" id="2.7.7.6" evidence="1"/>
<dbReference type="EMBL" id="AL935263">
    <property type="protein sequence ID" value="CCC78470.1"/>
    <property type="molecule type" value="Genomic_DNA"/>
</dbReference>
<dbReference type="RefSeq" id="WP_003641267.1">
    <property type="nucleotide sequence ID" value="NC_004567.2"/>
</dbReference>
<dbReference type="RefSeq" id="YP_004888984.1">
    <property type="nucleotide sequence ID" value="NC_004567.2"/>
</dbReference>
<dbReference type="SMR" id="Q88XW0"/>
<dbReference type="STRING" id="220668.lp_1062"/>
<dbReference type="EnsemblBacteria" id="CCC78470">
    <property type="protein sequence ID" value="CCC78470"/>
    <property type="gene ID" value="lp_1062"/>
</dbReference>
<dbReference type="KEGG" id="lpl:lp_1062"/>
<dbReference type="PATRIC" id="fig|220668.9.peg.897"/>
<dbReference type="eggNOG" id="COG0202">
    <property type="taxonomic scope" value="Bacteria"/>
</dbReference>
<dbReference type="HOGENOM" id="CLU_053084_0_1_9"/>
<dbReference type="OrthoDB" id="9805706at2"/>
<dbReference type="PhylomeDB" id="Q88XW0"/>
<dbReference type="Proteomes" id="UP000000432">
    <property type="component" value="Chromosome"/>
</dbReference>
<dbReference type="GO" id="GO:0005737">
    <property type="term" value="C:cytoplasm"/>
    <property type="evidence" value="ECO:0007669"/>
    <property type="project" value="UniProtKB-ARBA"/>
</dbReference>
<dbReference type="GO" id="GO:0000428">
    <property type="term" value="C:DNA-directed RNA polymerase complex"/>
    <property type="evidence" value="ECO:0007669"/>
    <property type="project" value="UniProtKB-KW"/>
</dbReference>
<dbReference type="GO" id="GO:0003677">
    <property type="term" value="F:DNA binding"/>
    <property type="evidence" value="ECO:0007669"/>
    <property type="project" value="UniProtKB-UniRule"/>
</dbReference>
<dbReference type="GO" id="GO:0003899">
    <property type="term" value="F:DNA-directed RNA polymerase activity"/>
    <property type="evidence" value="ECO:0007669"/>
    <property type="project" value="UniProtKB-UniRule"/>
</dbReference>
<dbReference type="GO" id="GO:0046983">
    <property type="term" value="F:protein dimerization activity"/>
    <property type="evidence" value="ECO:0007669"/>
    <property type="project" value="InterPro"/>
</dbReference>
<dbReference type="GO" id="GO:0006351">
    <property type="term" value="P:DNA-templated transcription"/>
    <property type="evidence" value="ECO:0007669"/>
    <property type="project" value="UniProtKB-UniRule"/>
</dbReference>
<dbReference type="CDD" id="cd06928">
    <property type="entry name" value="RNAP_alpha_NTD"/>
    <property type="match status" value="1"/>
</dbReference>
<dbReference type="FunFam" id="1.10.150.20:FF:000001">
    <property type="entry name" value="DNA-directed RNA polymerase subunit alpha"/>
    <property type="match status" value="1"/>
</dbReference>
<dbReference type="FunFam" id="2.170.120.12:FF:000001">
    <property type="entry name" value="DNA-directed RNA polymerase subunit alpha"/>
    <property type="match status" value="1"/>
</dbReference>
<dbReference type="Gene3D" id="1.10.150.20">
    <property type="entry name" value="5' to 3' exonuclease, C-terminal subdomain"/>
    <property type="match status" value="1"/>
</dbReference>
<dbReference type="Gene3D" id="2.170.120.12">
    <property type="entry name" value="DNA-directed RNA polymerase, insert domain"/>
    <property type="match status" value="1"/>
</dbReference>
<dbReference type="Gene3D" id="3.30.1360.10">
    <property type="entry name" value="RNA polymerase, RBP11-like subunit"/>
    <property type="match status" value="1"/>
</dbReference>
<dbReference type="HAMAP" id="MF_00059">
    <property type="entry name" value="RNApol_bact_RpoA"/>
    <property type="match status" value="1"/>
</dbReference>
<dbReference type="InterPro" id="IPR011262">
    <property type="entry name" value="DNA-dir_RNA_pol_insert"/>
</dbReference>
<dbReference type="InterPro" id="IPR011263">
    <property type="entry name" value="DNA-dir_RNA_pol_RpoA/D/Rpb3"/>
</dbReference>
<dbReference type="InterPro" id="IPR011773">
    <property type="entry name" value="DNA-dir_RpoA"/>
</dbReference>
<dbReference type="InterPro" id="IPR036603">
    <property type="entry name" value="RBP11-like"/>
</dbReference>
<dbReference type="InterPro" id="IPR011260">
    <property type="entry name" value="RNAP_asu_C"/>
</dbReference>
<dbReference type="InterPro" id="IPR036643">
    <property type="entry name" value="RNApol_insert_sf"/>
</dbReference>
<dbReference type="NCBIfam" id="NF003513">
    <property type="entry name" value="PRK05182.1-2"/>
    <property type="match status" value="1"/>
</dbReference>
<dbReference type="NCBIfam" id="NF003515">
    <property type="entry name" value="PRK05182.2-1"/>
    <property type="match status" value="1"/>
</dbReference>
<dbReference type="NCBIfam" id="NF003516">
    <property type="entry name" value="PRK05182.2-2"/>
    <property type="match status" value="1"/>
</dbReference>
<dbReference type="NCBIfam" id="NF003519">
    <property type="entry name" value="PRK05182.2-5"/>
    <property type="match status" value="1"/>
</dbReference>
<dbReference type="NCBIfam" id="TIGR02027">
    <property type="entry name" value="rpoA"/>
    <property type="match status" value="1"/>
</dbReference>
<dbReference type="Pfam" id="PF01000">
    <property type="entry name" value="RNA_pol_A_bac"/>
    <property type="match status" value="1"/>
</dbReference>
<dbReference type="Pfam" id="PF03118">
    <property type="entry name" value="RNA_pol_A_CTD"/>
    <property type="match status" value="1"/>
</dbReference>
<dbReference type="Pfam" id="PF01193">
    <property type="entry name" value="RNA_pol_L"/>
    <property type="match status" value="1"/>
</dbReference>
<dbReference type="SMART" id="SM00662">
    <property type="entry name" value="RPOLD"/>
    <property type="match status" value="1"/>
</dbReference>
<dbReference type="SUPFAM" id="SSF47789">
    <property type="entry name" value="C-terminal domain of RNA polymerase alpha subunit"/>
    <property type="match status" value="1"/>
</dbReference>
<dbReference type="SUPFAM" id="SSF56553">
    <property type="entry name" value="Insert subdomain of RNA polymerase alpha subunit"/>
    <property type="match status" value="1"/>
</dbReference>
<dbReference type="SUPFAM" id="SSF55257">
    <property type="entry name" value="RBP11-like subunits of RNA polymerase"/>
    <property type="match status" value="1"/>
</dbReference>
<sequence length="314" mass="34842">MIEFEKPNIHKIDENDNYGKFVVEPLERGYGTTLGNSLRRILLSSLPGAAVTSIQIDGVLHEFSTIEGVTEDVTAIILNVKKIALKLESDETKTLEIDVKGPANVTAGDIIGDADVEVLNPDLPICTVADGAHFHMRMTANTGRGYVSAEDNKHREDDMPIGVLAVDSLYSPIERVNYQVENTRVGQRDDFDKLTLDVWTNGSITPSEAISLSAKILTDHLSIFVNLTDEAKNTDVMVEKEETHKEKMLEMTIEELDLSVRSYNCLKRAGINTVQELTNKTEADMMKVRNLGRKSLEEVKAKLADLGLSLRKED</sequence>
<organism>
    <name type="scientific">Lactiplantibacillus plantarum (strain ATCC BAA-793 / NCIMB 8826 / WCFS1)</name>
    <name type="common">Lactobacillus plantarum</name>
    <dbReference type="NCBI Taxonomy" id="220668"/>
    <lineage>
        <taxon>Bacteria</taxon>
        <taxon>Bacillati</taxon>
        <taxon>Bacillota</taxon>
        <taxon>Bacilli</taxon>
        <taxon>Lactobacillales</taxon>
        <taxon>Lactobacillaceae</taxon>
        <taxon>Lactiplantibacillus</taxon>
    </lineage>
</organism>
<reference key="1">
    <citation type="journal article" date="2003" name="Proc. Natl. Acad. Sci. U.S.A.">
        <title>Complete genome sequence of Lactobacillus plantarum WCFS1.</title>
        <authorList>
            <person name="Kleerebezem M."/>
            <person name="Boekhorst J."/>
            <person name="van Kranenburg R."/>
            <person name="Molenaar D."/>
            <person name="Kuipers O.P."/>
            <person name="Leer R."/>
            <person name="Tarchini R."/>
            <person name="Peters S.A."/>
            <person name="Sandbrink H.M."/>
            <person name="Fiers M.W.E.J."/>
            <person name="Stiekema W."/>
            <person name="Klein Lankhorst R.M."/>
            <person name="Bron P.A."/>
            <person name="Hoffer S.M."/>
            <person name="Nierop Groot M.N."/>
            <person name="Kerkhoven R."/>
            <person name="De Vries M."/>
            <person name="Ursing B."/>
            <person name="De Vos W.M."/>
            <person name="Siezen R.J."/>
        </authorList>
    </citation>
    <scope>NUCLEOTIDE SEQUENCE [LARGE SCALE GENOMIC DNA]</scope>
    <source>
        <strain>ATCC BAA-793 / NCIMB 8826 / WCFS1</strain>
    </source>
</reference>
<reference key="2">
    <citation type="journal article" date="2012" name="J. Bacteriol.">
        <title>Complete resequencing and reannotation of the Lactobacillus plantarum WCFS1 genome.</title>
        <authorList>
            <person name="Siezen R.J."/>
            <person name="Francke C."/>
            <person name="Renckens B."/>
            <person name="Boekhorst J."/>
            <person name="Wels M."/>
            <person name="Kleerebezem M."/>
            <person name="van Hijum S.A."/>
        </authorList>
    </citation>
    <scope>NUCLEOTIDE SEQUENCE [LARGE SCALE GENOMIC DNA]</scope>
    <scope>GENOME REANNOTATION</scope>
    <source>
        <strain>ATCC BAA-793 / NCIMB 8826 / WCFS1</strain>
    </source>
</reference>
<evidence type="ECO:0000255" key="1">
    <source>
        <dbReference type="HAMAP-Rule" id="MF_00059"/>
    </source>
</evidence>
<protein>
    <recommendedName>
        <fullName evidence="1">DNA-directed RNA polymerase subunit alpha</fullName>
        <shortName evidence="1">RNAP subunit alpha</shortName>
        <ecNumber evidence="1">2.7.7.6</ecNumber>
    </recommendedName>
    <alternativeName>
        <fullName evidence="1">RNA polymerase subunit alpha</fullName>
    </alternativeName>
    <alternativeName>
        <fullName evidence="1">Transcriptase subunit alpha</fullName>
    </alternativeName>
</protein>
<proteinExistence type="inferred from homology"/>
<name>RPOA_LACPL</name>
<feature type="chain" id="PRO_0000175321" description="DNA-directed RNA polymerase subunit alpha">
    <location>
        <begin position="1"/>
        <end position="314"/>
    </location>
</feature>
<feature type="region of interest" description="Alpha N-terminal domain (alpha-NTD)" evidence="1">
    <location>
        <begin position="1"/>
        <end position="228"/>
    </location>
</feature>
<feature type="region of interest" description="Alpha C-terminal domain (alpha-CTD)" evidence="1">
    <location>
        <begin position="245"/>
        <end position="314"/>
    </location>
</feature>
<comment type="function">
    <text evidence="1">DNA-dependent RNA polymerase catalyzes the transcription of DNA into RNA using the four ribonucleoside triphosphates as substrates.</text>
</comment>
<comment type="catalytic activity">
    <reaction evidence="1">
        <text>RNA(n) + a ribonucleoside 5'-triphosphate = RNA(n+1) + diphosphate</text>
        <dbReference type="Rhea" id="RHEA:21248"/>
        <dbReference type="Rhea" id="RHEA-COMP:14527"/>
        <dbReference type="Rhea" id="RHEA-COMP:17342"/>
        <dbReference type="ChEBI" id="CHEBI:33019"/>
        <dbReference type="ChEBI" id="CHEBI:61557"/>
        <dbReference type="ChEBI" id="CHEBI:140395"/>
        <dbReference type="EC" id="2.7.7.6"/>
    </reaction>
</comment>
<comment type="subunit">
    <text evidence="1">Homodimer. The RNAP catalytic core consists of 2 alpha, 1 beta, 1 beta' and 1 omega subunit. When a sigma factor is associated with the core the holoenzyme is formed, which can initiate transcription.</text>
</comment>
<comment type="domain">
    <text evidence="1">The N-terminal domain is essential for RNAP assembly and basal transcription, whereas the C-terminal domain is involved in interaction with transcriptional regulators and with upstream promoter elements.</text>
</comment>
<comment type="similarity">
    <text evidence="1">Belongs to the RNA polymerase alpha chain family.</text>
</comment>
<accession>Q88XW0</accession>
<accession>F9UMN1</accession>